<gene>
    <name evidence="1" type="primary">murB</name>
    <name type="ordered locus">PMM0021</name>
</gene>
<organism>
    <name type="scientific">Prochlorococcus marinus subsp. pastoris (strain CCMP1986 / NIES-2087 / MED4)</name>
    <dbReference type="NCBI Taxonomy" id="59919"/>
    <lineage>
        <taxon>Bacteria</taxon>
        <taxon>Bacillati</taxon>
        <taxon>Cyanobacteriota</taxon>
        <taxon>Cyanophyceae</taxon>
        <taxon>Synechococcales</taxon>
        <taxon>Prochlorococcaceae</taxon>
        <taxon>Prochlorococcus</taxon>
    </lineage>
</organism>
<reference key="1">
    <citation type="journal article" date="2003" name="Nature">
        <title>Genome divergence in two Prochlorococcus ecotypes reflects oceanic niche differentiation.</title>
        <authorList>
            <person name="Rocap G."/>
            <person name="Larimer F.W."/>
            <person name="Lamerdin J.E."/>
            <person name="Malfatti S."/>
            <person name="Chain P."/>
            <person name="Ahlgren N.A."/>
            <person name="Arellano A."/>
            <person name="Coleman M."/>
            <person name="Hauser L."/>
            <person name="Hess W.R."/>
            <person name="Johnson Z.I."/>
            <person name="Land M.L."/>
            <person name="Lindell D."/>
            <person name="Post A.F."/>
            <person name="Regala W."/>
            <person name="Shah M."/>
            <person name="Shaw S.L."/>
            <person name="Steglich C."/>
            <person name="Sullivan M.B."/>
            <person name="Ting C.S."/>
            <person name="Tolonen A."/>
            <person name="Webb E.A."/>
            <person name="Zinser E.R."/>
            <person name="Chisholm S.W."/>
        </authorList>
    </citation>
    <scope>NUCLEOTIDE SEQUENCE [LARGE SCALE GENOMIC DNA]</scope>
    <source>
        <strain>CCMP1986 / NIES-2087 / MED4</strain>
    </source>
</reference>
<name>MURB_PROMP</name>
<accession>Q7V3P9</accession>
<comment type="function">
    <text evidence="1">Cell wall formation.</text>
</comment>
<comment type="catalytic activity">
    <reaction evidence="1">
        <text>UDP-N-acetyl-alpha-D-muramate + NADP(+) = UDP-N-acetyl-3-O-(1-carboxyvinyl)-alpha-D-glucosamine + NADPH + H(+)</text>
        <dbReference type="Rhea" id="RHEA:12248"/>
        <dbReference type="ChEBI" id="CHEBI:15378"/>
        <dbReference type="ChEBI" id="CHEBI:57783"/>
        <dbReference type="ChEBI" id="CHEBI:58349"/>
        <dbReference type="ChEBI" id="CHEBI:68483"/>
        <dbReference type="ChEBI" id="CHEBI:70757"/>
        <dbReference type="EC" id="1.3.1.98"/>
    </reaction>
</comment>
<comment type="cofactor">
    <cofactor evidence="1">
        <name>FAD</name>
        <dbReference type="ChEBI" id="CHEBI:57692"/>
    </cofactor>
</comment>
<comment type="pathway">
    <text evidence="1">Cell wall biogenesis; peptidoglycan biosynthesis.</text>
</comment>
<comment type="subcellular location">
    <subcellularLocation>
        <location evidence="1">Cytoplasm</location>
    </subcellularLocation>
</comment>
<comment type="similarity">
    <text evidence="1">Belongs to the MurB family.</text>
</comment>
<dbReference type="EC" id="1.3.1.98" evidence="1"/>
<dbReference type="EMBL" id="BX548174">
    <property type="protein sequence ID" value="CAE18480.1"/>
    <property type="molecule type" value="Genomic_DNA"/>
</dbReference>
<dbReference type="RefSeq" id="WP_011131659.1">
    <property type="nucleotide sequence ID" value="NC_005072.1"/>
</dbReference>
<dbReference type="SMR" id="Q7V3P9"/>
<dbReference type="STRING" id="59919.PMM0021"/>
<dbReference type="KEGG" id="pmm:PMM0021"/>
<dbReference type="eggNOG" id="COG0812">
    <property type="taxonomic scope" value="Bacteria"/>
</dbReference>
<dbReference type="HOGENOM" id="CLU_035304_1_1_3"/>
<dbReference type="OrthoDB" id="9804753at2"/>
<dbReference type="UniPathway" id="UPA00219"/>
<dbReference type="Proteomes" id="UP000001026">
    <property type="component" value="Chromosome"/>
</dbReference>
<dbReference type="GO" id="GO:0005829">
    <property type="term" value="C:cytosol"/>
    <property type="evidence" value="ECO:0007669"/>
    <property type="project" value="TreeGrafter"/>
</dbReference>
<dbReference type="GO" id="GO:0071949">
    <property type="term" value="F:FAD binding"/>
    <property type="evidence" value="ECO:0007669"/>
    <property type="project" value="InterPro"/>
</dbReference>
<dbReference type="GO" id="GO:0008762">
    <property type="term" value="F:UDP-N-acetylmuramate dehydrogenase activity"/>
    <property type="evidence" value="ECO:0007669"/>
    <property type="project" value="UniProtKB-UniRule"/>
</dbReference>
<dbReference type="GO" id="GO:0051301">
    <property type="term" value="P:cell division"/>
    <property type="evidence" value="ECO:0007669"/>
    <property type="project" value="UniProtKB-KW"/>
</dbReference>
<dbReference type="GO" id="GO:0071555">
    <property type="term" value="P:cell wall organization"/>
    <property type="evidence" value="ECO:0007669"/>
    <property type="project" value="UniProtKB-KW"/>
</dbReference>
<dbReference type="GO" id="GO:0009252">
    <property type="term" value="P:peptidoglycan biosynthetic process"/>
    <property type="evidence" value="ECO:0007669"/>
    <property type="project" value="UniProtKB-UniRule"/>
</dbReference>
<dbReference type="GO" id="GO:0008360">
    <property type="term" value="P:regulation of cell shape"/>
    <property type="evidence" value="ECO:0007669"/>
    <property type="project" value="UniProtKB-KW"/>
</dbReference>
<dbReference type="Gene3D" id="3.30.465.10">
    <property type="match status" value="1"/>
</dbReference>
<dbReference type="Gene3D" id="3.90.78.10">
    <property type="entry name" value="UDP-N-acetylenolpyruvoylglucosamine reductase, C-terminal domain"/>
    <property type="match status" value="1"/>
</dbReference>
<dbReference type="Gene3D" id="3.30.43.10">
    <property type="entry name" value="Uridine Diphospho-n-acetylenolpyruvylglucosamine Reductase, domain 2"/>
    <property type="match status" value="1"/>
</dbReference>
<dbReference type="HAMAP" id="MF_00037">
    <property type="entry name" value="MurB"/>
    <property type="match status" value="1"/>
</dbReference>
<dbReference type="InterPro" id="IPR016166">
    <property type="entry name" value="FAD-bd_PCMH"/>
</dbReference>
<dbReference type="InterPro" id="IPR036318">
    <property type="entry name" value="FAD-bd_PCMH-like_sf"/>
</dbReference>
<dbReference type="InterPro" id="IPR016167">
    <property type="entry name" value="FAD-bd_PCMH_sub1"/>
</dbReference>
<dbReference type="InterPro" id="IPR016169">
    <property type="entry name" value="FAD-bd_PCMH_sub2"/>
</dbReference>
<dbReference type="InterPro" id="IPR003170">
    <property type="entry name" value="MurB"/>
</dbReference>
<dbReference type="InterPro" id="IPR011601">
    <property type="entry name" value="MurB_C"/>
</dbReference>
<dbReference type="InterPro" id="IPR036635">
    <property type="entry name" value="MurB_C_sf"/>
</dbReference>
<dbReference type="InterPro" id="IPR006094">
    <property type="entry name" value="Oxid_FAD_bind_N"/>
</dbReference>
<dbReference type="NCBIfam" id="TIGR00179">
    <property type="entry name" value="murB"/>
    <property type="match status" value="1"/>
</dbReference>
<dbReference type="NCBIfam" id="NF010480">
    <property type="entry name" value="PRK13905.1"/>
    <property type="match status" value="1"/>
</dbReference>
<dbReference type="PANTHER" id="PTHR21071">
    <property type="entry name" value="UDP-N-ACETYLENOLPYRUVOYLGLUCOSAMINE REDUCTASE"/>
    <property type="match status" value="1"/>
</dbReference>
<dbReference type="PANTHER" id="PTHR21071:SF4">
    <property type="entry name" value="UDP-N-ACETYLENOLPYRUVOYLGLUCOSAMINE REDUCTASE"/>
    <property type="match status" value="1"/>
</dbReference>
<dbReference type="Pfam" id="PF01565">
    <property type="entry name" value="FAD_binding_4"/>
    <property type="match status" value="1"/>
</dbReference>
<dbReference type="Pfam" id="PF02873">
    <property type="entry name" value="MurB_C"/>
    <property type="match status" value="1"/>
</dbReference>
<dbReference type="SUPFAM" id="SSF56176">
    <property type="entry name" value="FAD-binding/transporter-associated domain-like"/>
    <property type="match status" value="1"/>
</dbReference>
<dbReference type="SUPFAM" id="SSF56194">
    <property type="entry name" value="Uridine diphospho-N-Acetylenolpyruvylglucosamine reductase, MurB, C-terminal domain"/>
    <property type="match status" value="1"/>
</dbReference>
<dbReference type="PROSITE" id="PS51387">
    <property type="entry name" value="FAD_PCMH"/>
    <property type="match status" value="1"/>
</dbReference>
<sequence>MKNITFKEKINLSNYTTIKVGGFAEYFSKPNNTDEFINLINWASLNNQKCRIIGAGSNLLINNIFLKGLTICTKKMRSIKIESHSGIVEVEAGVMLPTMSNILAKKGLQGGEWTVGIPGTVGGSICMNAGSKQLSLANNLLSVRVIDTKTLKISEIEKKDINFQYRFSPFQQNNLMIISAKLLFEPKGNIEQLLETTQKNLKKKTDTQPYHLPSFGSVFKNPTNNYAGKLIEELGLKGFKIGGAEISTMHGNFIVNNSFANSKDILDLITVIQQKVLQKKGIFLEPEVRMIGFDYP</sequence>
<keyword id="KW-0131">Cell cycle</keyword>
<keyword id="KW-0132">Cell division</keyword>
<keyword id="KW-0133">Cell shape</keyword>
<keyword id="KW-0961">Cell wall biogenesis/degradation</keyword>
<keyword id="KW-0963">Cytoplasm</keyword>
<keyword id="KW-0274">FAD</keyword>
<keyword id="KW-0285">Flavoprotein</keyword>
<keyword id="KW-0521">NADP</keyword>
<keyword id="KW-0560">Oxidoreductase</keyword>
<keyword id="KW-0573">Peptidoglycan synthesis</keyword>
<protein>
    <recommendedName>
        <fullName evidence="1">UDP-N-acetylenolpyruvoylglucosamine reductase</fullName>
        <ecNumber evidence="1">1.3.1.98</ecNumber>
    </recommendedName>
    <alternativeName>
        <fullName evidence="1">UDP-N-acetylmuramate dehydrogenase</fullName>
    </alternativeName>
</protein>
<feature type="chain" id="PRO_0000179241" description="UDP-N-acetylenolpyruvoylglucosamine reductase">
    <location>
        <begin position="1"/>
        <end position="296"/>
    </location>
</feature>
<feature type="domain" description="FAD-binding PCMH-type" evidence="1">
    <location>
        <begin position="19"/>
        <end position="203"/>
    </location>
</feature>
<feature type="active site" evidence="1">
    <location>
        <position position="166"/>
    </location>
</feature>
<feature type="active site" description="Proton donor" evidence="1">
    <location>
        <position position="217"/>
    </location>
</feature>
<feature type="active site" evidence="1">
    <location>
        <position position="287"/>
    </location>
</feature>
<proteinExistence type="inferred from homology"/>
<evidence type="ECO:0000255" key="1">
    <source>
        <dbReference type="HAMAP-Rule" id="MF_00037"/>
    </source>
</evidence>